<comment type="function">
    <text evidence="2 3 8">Involved in transforming growth factor beta (TGF-beta)-induced smooth muscle differentiation (By similarity). TGF-beta induces expression and nuclear translocation of OLFM2 where it binds to SRF, causing its dissociation from the transcriptional repressor HEY2/HERP1 and facilitating binding of SRF to target genes (By similarity). Plays a role in AMPAR complex organization (PubMed:25218043). Is a regulator of vascular smooth-muscle cell (SMC) phenotypic switching, that acts by promoting RUNX2 and inhibiting MYOCD binding to SRF. SMC phenotypic switching is the process through which vascular SMCs undergo transition between a quiescent contractile phenotype and a proliferative synthetic phenotype in response to pathological stimuli. SMC phenotypic plasticity is essential for vascular development and remodeling (By similarity).</text>
</comment>
<comment type="subunit">
    <text evidence="2 3 7 8">Peripherally associated with AMPAR complex. AMPAR complex consists of an inner core made of 4 pore-forming GluA/GRIA proteins (GRIA1, GRIA2, GRIA3 and GRIA4) and 4 major auxiliary subunits arranged in a twofold symmetry. One of the two pairs of distinct binding sites is occupied either by CNIH2, CNIH3 or CACNG2, CACNG3. The other harbors CACNG2, CACNG3, CACNG4, CACNG8 or GSG1L. This inner core of AMPAR complex is complemented by outer core constituents binding directly to the GluA/GRIA proteins at sites distinct from the interaction sites of the inner core constituents. Outer core constituents include at least PRRT1, PRRT2, CKAMP44/SHISA9, FRRS1L and NRN1. The proteins of the inner and outer core serve as a platform for other, more peripherally associated AMPAR constituents, including OLFM2. Alone or in combination, these auxiliary subunits control the gating and pharmacology of the AMPAR complex and profoundly impact their biogenesis and protein processing (PubMed:22632720). Interacts with GRIA2 (PubMed:25218043). Interacts with OLFM1 and OLFM3 (By similarity). Interacts with SRF; the interaction promotes dissociation of SRF from the transcriptional repressor HEY2 (By similarity). Interacts with RUNX2 (By similarity).</text>
</comment>
<comment type="subcellular location">
    <subcellularLocation>
        <location evidence="2">Secreted</location>
    </subcellularLocation>
    <subcellularLocation>
        <location evidence="8 11">Synapse</location>
    </subcellularLocation>
    <subcellularLocation>
        <location evidence="8">Membrane</location>
    </subcellularLocation>
    <subcellularLocation>
        <location evidence="2">Nucleus</location>
    </subcellularLocation>
    <subcellularLocation>
        <location evidence="2">Cytoplasm</location>
    </subcellularLocation>
    <text evidence="2">Nuclear localization is induced by TGF-beta.</text>
</comment>
<comment type="tissue specificity">
    <text evidence="6 7 8 9">Expressed in the brain (at protein level) (PubMed:22632720). In the developing eye, first detected at 12 dpc in the retinal pigmented epithelium and preferentially expressed in differentiating retinal ganglion cells between 15 and 18 dpc (PubMed:21228389). In the brain, expression is detected mainly in the olfactory bulb, cortex, piriform cortex, olfactory trabeculae, and inferior and superior colliculus (PubMed:25218043). In the adult eye, expression is detected mainly in retinal ganglion cells (PubMed:25218043). Expressed in carotid arteries (PubMed:28062493).</text>
</comment>
<comment type="developmental stage">
    <text evidence="6">During embryonic eye development, first detected at 12 dpc with maximum levels at 19.5 dpc and down-regulation of expression postnatally. In brain, levels increase from 13.5 dpc to postnatal day 6 and decrease in the adult.</text>
</comment>
<comment type="disruption phenotype">
    <text evidence="8">No gross abnormalities with normal lifespan but mutants display reduced exploration, locomotion and olfactory sensitivity, reduced amplitude of the first negative wave in the visual evoked potential test, abnormal motor coordination, anxiety-related behavior and changes in AMPAR complex composition.</text>
</comment>
<keyword id="KW-0175">Coiled coil</keyword>
<keyword id="KW-0963">Cytoplasm</keyword>
<keyword id="KW-1015">Disulfide bond</keyword>
<keyword id="KW-0325">Glycoprotein</keyword>
<keyword id="KW-0472">Membrane</keyword>
<keyword id="KW-0539">Nucleus</keyword>
<keyword id="KW-1185">Reference proteome</keyword>
<keyword id="KW-0964">Secreted</keyword>
<keyword id="KW-0732">Signal</keyword>
<keyword id="KW-0770">Synapse</keyword>
<accession>Q8BM13</accession>
<accession>Q0VFZ0</accession>
<accession>Q0VG58</accession>
<evidence type="ECO:0000250" key="1"/>
<evidence type="ECO:0000250" key="2">
    <source>
        <dbReference type="UniProtKB" id="O95897"/>
    </source>
</evidence>
<evidence type="ECO:0000250" key="3">
    <source>
        <dbReference type="UniProtKB" id="Q568Y7"/>
    </source>
</evidence>
<evidence type="ECO:0000255" key="4"/>
<evidence type="ECO:0000255" key="5">
    <source>
        <dbReference type="PROSITE-ProRule" id="PRU00446"/>
    </source>
</evidence>
<evidence type="ECO:0000269" key="6">
    <source>
    </source>
</evidence>
<evidence type="ECO:0000269" key="7">
    <source>
    </source>
</evidence>
<evidence type="ECO:0000269" key="8">
    <source>
    </source>
</evidence>
<evidence type="ECO:0000269" key="9">
    <source>
    </source>
</evidence>
<evidence type="ECO:0000305" key="10"/>
<evidence type="ECO:0000305" key="11">
    <source>
    </source>
</evidence>
<gene>
    <name type="primary">Olfm2</name>
</gene>
<organism>
    <name type="scientific">Mus musculus</name>
    <name type="common">Mouse</name>
    <dbReference type="NCBI Taxonomy" id="10090"/>
    <lineage>
        <taxon>Eukaryota</taxon>
        <taxon>Metazoa</taxon>
        <taxon>Chordata</taxon>
        <taxon>Craniata</taxon>
        <taxon>Vertebrata</taxon>
        <taxon>Euteleostomi</taxon>
        <taxon>Mammalia</taxon>
        <taxon>Eutheria</taxon>
        <taxon>Euarchontoglires</taxon>
        <taxon>Glires</taxon>
        <taxon>Rodentia</taxon>
        <taxon>Myomorpha</taxon>
        <taxon>Muroidea</taxon>
        <taxon>Muridae</taxon>
        <taxon>Murinae</taxon>
        <taxon>Mus</taxon>
        <taxon>Mus</taxon>
    </lineage>
</organism>
<proteinExistence type="evidence at protein level"/>
<protein>
    <recommendedName>
        <fullName>Noelin-2</fullName>
    </recommendedName>
    <alternativeName>
        <fullName>Olfactomedin-2</fullName>
    </alternativeName>
</protein>
<name>NOE2_MOUSE</name>
<feature type="signal peptide" evidence="1">
    <location>
        <begin position="1"/>
        <end position="14"/>
    </location>
</feature>
<feature type="chain" id="PRO_0000020079" description="Noelin-2">
    <location>
        <begin position="15"/>
        <end position="448"/>
    </location>
</feature>
<feature type="domain" description="Olfactomedin-like" evidence="5">
    <location>
        <begin position="188"/>
        <end position="440"/>
    </location>
</feature>
<feature type="coiled-coil region" evidence="4">
    <location>
        <begin position="52"/>
        <end position="79"/>
    </location>
</feature>
<feature type="coiled-coil region" evidence="4">
    <location>
        <begin position="130"/>
        <end position="187"/>
    </location>
</feature>
<feature type="glycosylation site" description="N-linked (GlcNAc...) asparagine" evidence="4">
    <location>
        <position position="68"/>
    </location>
</feature>
<feature type="glycosylation site" description="N-linked (GlcNAc...) asparagine" evidence="4">
    <location>
        <position position="149"/>
    </location>
</feature>
<feature type="glycosylation site" description="N-linked (GlcNAc...) asparagine" evidence="4">
    <location>
        <position position="269"/>
    </location>
</feature>
<feature type="glycosylation site" description="N-linked (GlcNAc...) asparagine" evidence="4">
    <location>
        <position position="304"/>
    </location>
</feature>
<feature type="glycosylation site" description="N-linked (GlcNAc...) asparagine" evidence="4">
    <location>
        <position position="393"/>
    </location>
</feature>
<feature type="glycosylation site" description="N-linked (GlcNAc...) asparagine" evidence="4">
    <location>
        <position position="435"/>
    </location>
</feature>
<feature type="disulfide bond" evidence="5">
    <location>
        <begin position="189"/>
        <end position="371"/>
    </location>
</feature>
<feature type="sequence conflict" description="In Ref. 1; BAC29750." evidence="10" ref="1">
    <original>H</original>
    <variation>N</variation>
    <location>
        <position position="405"/>
    </location>
</feature>
<dbReference type="EMBL" id="AK037199">
    <property type="protein sequence ID" value="BAC29750.1"/>
    <property type="molecule type" value="mRNA"/>
</dbReference>
<dbReference type="EMBL" id="CH466522">
    <property type="protein sequence ID" value="EDL25128.1"/>
    <property type="molecule type" value="Genomic_DNA"/>
</dbReference>
<dbReference type="EMBL" id="BC115981">
    <property type="protein sequence ID" value="AAI15982.1"/>
    <property type="molecule type" value="mRNA"/>
</dbReference>
<dbReference type="EMBL" id="BC117536">
    <property type="protein sequence ID" value="AAI17537.1"/>
    <property type="molecule type" value="mRNA"/>
</dbReference>
<dbReference type="CCDS" id="CCDS40546.1"/>
<dbReference type="RefSeq" id="NP_776138.2">
    <property type="nucleotide sequence ID" value="NM_173777.4"/>
</dbReference>
<dbReference type="SMR" id="Q8BM13"/>
<dbReference type="BioGRID" id="232687">
    <property type="interactions" value="4"/>
</dbReference>
<dbReference type="FunCoup" id="Q8BM13">
    <property type="interactions" value="256"/>
</dbReference>
<dbReference type="IntAct" id="Q8BM13">
    <property type="interactions" value="1"/>
</dbReference>
<dbReference type="MINT" id="Q8BM13"/>
<dbReference type="STRING" id="10090.ENSMUSP00000034692"/>
<dbReference type="GlyConnect" id="2566">
    <property type="glycosylation" value="2 N-Linked glycans (2 sites)"/>
</dbReference>
<dbReference type="GlyCosmos" id="Q8BM13">
    <property type="glycosylation" value="6 sites, 2 glycans"/>
</dbReference>
<dbReference type="GlyGen" id="Q8BM13">
    <property type="glycosylation" value="7 sites, 3 N-linked glycans (3 sites), 1 O-linked glycan (1 site)"/>
</dbReference>
<dbReference type="iPTMnet" id="Q8BM13"/>
<dbReference type="PhosphoSitePlus" id="Q8BM13"/>
<dbReference type="PaxDb" id="10090-ENSMUSP00000034692"/>
<dbReference type="PeptideAtlas" id="Q8BM13"/>
<dbReference type="ProteomicsDB" id="293869"/>
<dbReference type="Antibodypedia" id="42819">
    <property type="antibodies" value="48 antibodies from 16 providers"/>
</dbReference>
<dbReference type="DNASU" id="244723"/>
<dbReference type="Ensembl" id="ENSMUST00000034692.9">
    <property type="protein sequence ID" value="ENSMUSP00000034692.8"/>
    <property type="gene ID" value="ENSMUSG00000032172.9"/>
</dbReference>
<dbReference type="GeneID" id="244723"/>
<dbReference type="KEGG" id="mmu:244723"/>
<dbReference type="UCSC" id="uc009oje.1">
    <property type="organism name" value="mouse"/>
</dbReference>
<dbReference type="AGR" id="MGI:3045350"/>
<dbReference type="CTD" id="93145"/>
<dbReference type="MGI" id="MGI:3045350">
    <property type="gene designation" value="Olfm2"/>
</dbReference>
<dbReference type="VEuPathDB" id="HostDB:ENSMUSG00000032172"/>
<dbReference type="eggNOG" id="KOG3545">
    <property type="taxonomic scope" value="Eukaryota"/>
</dbReference>
<dbReference type="GeneTree" id="ENSGT00940000159148"/>
<dbReference type="HOGENOM" id="CLU_035236_0_0_1"/>
<dbReference type="InParanoid" id="Q8BM13"/>
<dbReference type="PhylomeDB" id="Q8BM13"/>
<dbReference type="TreeFam" id="TF315964"/>
<dbReference type="BioGRID-ORCS" id="244723">
    <property type="hits" value="5 hits in 76 CRISPR screens"/>
</dbReference>
<dbReference type="CD-CODE" id="CE726F99">
    <property type="entry name" value="Postsynaptic density"/>
</dbReference>
<dbReference type="ChiTaRS" id="Olfm2">
    <property type="organism name" value="mouse"/>
</dbReference>
<dbReference type="PRO" id="PR:Q8BM13"/>
<dbReference type="Proteomes" id="UP000000589">
    <property type="component" value="Chromosome 9"/>
</dbReference>
<dbReference type="RNAct" id="Q8BM13">
    <property type="molecule type" value="protein"/>
</dbReference>
<dbReference type="Bgee" id="ENSMUSG00000032172">
    <property type="expression patterns" value="Expressed in embryonic brain and 101 other cell types or tissues"/>
</dbReference>
<dbReference type="ExpressionAtlas" id="Q8BM13">
    <property type="expression patterns" value="baseline and differential"/>
</dbReference>
<dbReference type="GO" id="GO:0032281">
    <property type="term" value="C:AMPA glutamate receptor complex"/>
    <property type="evidence" value="ECO:0000314"/>
    <property type="project" value="MGI"/>
</dbReference>
<dbReference type="GO" id="GO:0005737">
    <property type="term" value="C:cytoplasm"/>
    <property type="evidence" value="ECO:0000250"/>
    <property type="project" value="UniProtKB"/>
</dbReference>
<dbReference type="GO" id="GO:0005576">
    <property type="term" value="C:extracellular region"/>
    <property type="evidence" value="ECO:0000266"/>
    <property type="project" value="MGI"/>
</dbReference>
<dbReference type="GO" id="GO:0099147">
    <property type="term" value="C:extrinsic component of postsynaptic density membrane"/>
    <property type="evidence" value="ECO:0000314"/>
    <property type="project" value="SynGO"/>
</dbReference>
<dbReference type="GO" id="GO:0098978">
    <property type="term" value="C:glutamatergic synapse"/>
    <property type="evidence" value="ECO:0000314"/>
    <property type="project" value="SynGO"/>
</dbReference>
<dbReference type="GO" id="GO:0005634">
    <property type="term" value="C:nucleus"/>
    <property type="evidence" value="ECO:0000250"/>
    <property type="project" value="UniProtKB"/>
</dbReference>
<dbReference type="GO" id="GO:0097060">
    <property type="term" value="C:synaptic membrane"/>
    <property type="evidence" value="ECO:0000314"/>
    <property type="project" value="MGI"/>
</dbReference>
<dbReference type="GO" id="GO:0007626">
    <property type="term" value="P:locomotory behavior"/>
    <property type="evidence" value="ECO:0000315"/>
    <property type="project" value="MGI"/>
</dbReference>
<dbReference type="GO" id="GO:0099645">
    <property type="term" value="P:neurotransmitter receptor localization to postsynaptic specialization membrane"/>
    <property type="evidence" value="ECO:0000314"/>
    <property type="project" value="SynGO"/>
</dbReference>
<dbReference type="GO" id="GO:0051152">
    <property type="term" value="P:positive regulation of smooth muscle cell differentiation"/>
    <property type="evidence" value="ECO:0000250"/>
    <property type="project" value="UniProtKB"/>
</dbReference>
<dbReference type="GO" id="GO:0009306">
    <property type="term" value="P:protein secretion"/>
    <property type="evidence" value="ECO:0000266"/>
    <property type="project" value="MGI"/>
</dbReference>
<dbReference type="GO" id="GO:1905174">
    <property type="term" value="P:regulation of vascular associated smooth muscle cell dedifferentiation"/>
    <property type="evidence" value="ECO:0000250"/>
    <property type="project" value="UniProtKB"/>
</dbReference>
<dbReference type="GO" id="GO:0007601">
    <property type="term" value="P:visual perception"/>
    <property type="evidence" value="ECO:0000315"/>
    <property type="project" value="MGI"/>
</dbReference>
<dbReference type="InterPro" id="IPR022082">
    <property type="entry name" value="Noelin_dom"/>
</dbReference>
<dbReference type="InterPro" id="IPR003112">
    <property type="entry name" value="Olfac-like_dom"/>
</dbReference>
<dbReference type="InterPro" id="IPR050605">
    <property type="entry name" value="Olfactomedin-like_domain"/>
</dbReference>
<dbReference type="PANTHER" id="PTHR23192:SF27">
    <property type="entry name" value="NOELIN-2"/>
    <property type="match status" value="1"/>
</dbReference>
<dbReference type="PANTHER" id="PTHR23192">
    <property type="entry name" value="OLFACTOMEDIN-RELATED"/>
    <property type="match status" value="1"/>
</dbReference>
<dbReference type="Pfam" id="PF12308">
    <property type="entry name" value="Noelin-1"/>
    <property type="match status" value="1"/>
</dbReference>
<dbReference type="Pfam" id="PF02191">
    <property type="entry name" value="OLF"/>
    <property type="match status" value="1"/>
</dbReference>
<dbReference type="SMART" id="SM00284">
    <property type="entry name" value="OLF"/>
    <property type="match status" value="1"/>
</dbReference>
<dbReference type="PROSITE" id="PS51132">
    <property type="entry name" value="OLF"/>
    <property type="match status" value="1"/>
</dbReference>
<sequence>MRKLRQTGTTIAGGQTLFQSPEEGWQLYTSAQAPDGKCVCTAVIPAQSTCARDGRSRELRQLMEKVQNVSQSMEVLELRTFRDLQYVRSMETLMRSLDARLRAADGSVSAKSFQELKDRMTELLPLSSVLEQYKADTRTIVRLREEVRNLSGNLAAIQEEMGAYGYEDLQQRVMALEARLHACAQKLGCGKLTGVSNPITIRAMGSRFGSWMTDTMAPSADSRVWYMDGYYKGRRVLEFRTLGDFIKGQNFIQHLLPQPWAGTGHVVYNGSLFYNKYQSNVVVKYHFRSRSVLVQRSLPGAGYNNTFPYSWGGFSDMDFMVDESGLWAVYTTNQNAGNIVVSRLDPHTLEVVRSWDTGYPKRSAGEAFMICGVLYVTNSHLAGAKVYFAYFTNTSSYEYTDVPFHNQYSHISMLDYNPRERALYTWNNGHQVLYNVTLFHVISTAGDP</sequence>
<reference key="1">
    <citation type="journal article" date="2005" name="Science">
        <title>The transcriptional landscape of the mammalian genome.</title>
        <authorList>
            <person name="Carninci P."/>
            <person name="Kasukawa T."/>
            <person name="Katayama S."/>
            <person name="Gough J."/>
            <person name="Frith M.C."/>
            <person name="Maeda N."/>
            <person name="Oyama R."/>
            <person name="Ravasi T."/>
            <person name="Lenhard B."/>
            <person name="Wells C."/>
            <person name="Kodzius R."/>
            <person name="Shimokawa K."/>
            <person name="Bajic V.B."/>
            <person name="Brenner S.E."/>
            <person name="Batalov S."/>
            <person name="Forrest A.R."/>
            <person name="Zavolan M."/>
            <person name="Davis M.J."/>
            <person name="Wilming L.G."/>
            <person name="Aidinis V."/>
            <person name="Allen J.E."/>
            <person name="Ambesi-Impiombato A."/>
            <person name="Apweiler R."/>
            <person name="Aturaliya R.N."/>
            <person name="Bailey T.L."/>
            <person name="Bansal M."/>
            <person name="Baxter L."/>
            <person name="Beisel K.W."/>
            <person name="Bersano T."/>
            <person name="Bono H."/>
            <person name="Chalk A.M."/>
            <person name="Chiu K.P."/>
            <person name="Choudhary V."/>
            <person name="Christoffels A."/>
            <person name="Clutterbuck D.R."/>
            <person name="Crowe M.L."/>
            <person name="Dalla E."/>
            <person name="Dalrymple B.P."/>
            <person name="de Bono B."/>
            <person name="Della Gatta G."/>
            <person name="di Bernardo D."/>
            <person name="Down T."/>
            <person name="Engstrom P."/>
            <person name="Fagiolini M."/>
            <person name="Faulkner G."/>
            <person name="Fletcher C.F."/>
            <person name="Fukushima T."/>
            <person name="Furuno M."/>
            <person name="Futaki S."/>
            <person name="Gariboldi M."/>
            <person name="Georgii-Hemming P."/>
            <person name="Gingeras T.R."/>
            <person name="Gojobori T."/>
            <person name="Green R.E."/>
            <person name="Gustincich S."/>
            <person name="Harbers M."/>
            <person name="Hayashi Y."/>
            <person name="Hensch T.K."/>
            <person name="Hirokawa N."/>
            <person name="Hill D."/>
            <person name="Huminiecki L."/>
            <person name="Iacono M."/>
            <person name="Ikeo K."/>
            <person name="Iwama A."/>
            <person name="Ishikawa T."/>
            <person name="Jakt M."/>
            <person name="Kanapin A."/>
            <person name="Katoh M."/>
            <person name="Kawasawa Y."/>
            <person name="Kelso J."/>
            <person name="Kitamura H."/>
            <person name="Kitano H."/>
            <person name="Kollias G."/>
            <person name="Krishnan S.P."/>
            <person name="Kruger A."/>
            <person name="Kummerfeld S.K."/>
            <person name="Kurochkin I.V."/>
            <person name="Lareau L.F."/>
            <person name="Lazarevic D."/>
            <person name="Lipovich L."/>
            <person name="Liu J."/>
            <person name="Liuni S."/>
            <person name="McWilliam S."/>
            <person name="Madan Babu M."/>
            <person name="Madera M."/>
            <person name="Marchionni L."/>
            <person name="Matsuda H."/>
            <person name="Matsuzawa S."/>
            <person name="Miki H."/>
            <person name="Mignone F."/>
            <person name="Miyake S."/>
            <person name="Morris K."/>
            <person name="Mottagui-Tabar S."/>
            <person name="Mulder N."/>
            <person name="Nakano N."/>
            <person name="Nakauchi H."/>
            <person name="Ng P."/>
            <person name="Nilsson R."/>
            <person name="Nishiguchi S."/>
            <person name="Nishikawa S."/>
            <person name="Nori F."/>
            <person name="Ohara O."/>
            <person name="Okazaki Y."/>
            <person name="Orlando V."/>
            <person name="Pang K.C."/>
            <person name="Pavan W.J."/>
            <person name="Pavesi G."/>
            <person name="Pesole G."/>
            <person name="Petrovsky N."/>
            <person name="Piazza S."/>
            <person name="Reed J."/>
            <person name="Reid J.F."/>
            <person name="Ring B.Z."/>
            <person name="Ringwald M."/>
            <person name="Rost B."/>
            <person name="Ruan Y."/>
            <person name="Salzberg S.L."/>
            <person name="Sandelin A."/>
            <person name="Schneider C."/>
            <person name="Schoenbach C."/>
            <person name="Sekiguchi K."/>
            <person name="Semple C.A."/>
            <person name="Seno S."/>
            <person name="Sessa L."/>
            <person name="Sheng Y."/>
            <person name="Shibata Y."/>
            <person name="Shimada H."/>
            <person name="Shimada K."/>
            <person name="Silva D."/>
            <person name="Sinclair B."/>
            <person name="Sperling S."/>
            <person name="Stupka E."/>
            <person name="Sugiura K."/>
            <person name="Sultana R."/>
            <person name="Takenaka Y."/>
            <person name="Taki K."/>
            <person name="Tammoja K."/>
            <person name="Tan S.L."/>
            <person name="Tang S."/>
            <person name="Taylor M.S."/>
            <person name="Tegner J."/>
            <person name="Teichmann S.A."/>
            <person name="Ueda H.R."/>
            <person name="van Nimwegen E."/>
            <person name="Verardo R."/>
            <person name="Wei C.L."/>
            <person name="Yagi K."/>
            <person name="Yamanishi H."/>
            <person name="Zabarovsky E."/>
            <person name="Zhu S."/>
            <person name="Zimmer A."/>
            <person name="Hide W."/>
            <person name="Bult C."/>
            <person name="Grimmond S.M."/>
            <person name="Teasdale R.D."/>
            <person name="Liu E.T."/>
            <person name="Brusic V."/>
            <person name="Quackenbush J."/>
            <person name="Wahlestedt C."/>
            <person name="Mattick J.S."/>
            <person name="Hume D.A."/>
            <person name="Kai C."/>
            <person name="Sasaki D."/>
            <person name="Tomaru Y."/>
            <person name="Fukuda S."/>
            <person name="Kanamori-Katayama M."/>
            <person name="Suzuki M."/>
            <person name="Aoki J."/>
            <person name="Arakawa T."/>
            <person name="Iida J."/>
            <person name="Imamura K."/>
            <person name="Itoh M."/>
            <person name="Kato T."/>
            <person name="Kawaji H."/>
            <person name="Kawagashira N."/>
            <person name="Kawashima T."/>
            <person name="Kojima M."/>
            <person name="Kondo S."/>
            <person name="Konno H."/>
            <person name="Nakano K."/>
            <person name="Ninomiya N."/>
            <person name="Nishio T."/>
            <person name="Okada M."/>
            <person name="Plessy C."/>
            <person name="Shibata K."/>
            <person name="Shiraki T."/>
            <person name="Suzuki S."/>
            <person name="Tagami M."/>
            <person name="Waki K."/>
            <person name="Watahiki A."/>
            <person name="Okamura-Oho Y."/>
            <person name="Suzuki H."/>
            <person name="Kawai J."/>
            <person name="Hayashizaki Y."/>
        </authorList>
    </citation>
    <scope>NUCLEOTIDE SEQUENCE [LARGE SCALE MRNA]</scope>
    <source>
        <strain>C57BL/6J</strain>
        <tissue>Skin</tissue>
    </source>
</reference>
<reference key="2">
    <citation type="submission" date="2005-07" db="EMBL/GenBank/DDBJ databases">
        <authorList>
            <person name="Mural R.J."/>
            <person name="Adams M.D."/>
            <person name="Myers E.W."/>
            <person name="Smith H.O."/>
            <person name="Venter J.C."/>
        </authorList>
    </citation>
    <scope>NUCLEOTIDE SEQUENCE [LARGE SCALE GENOMIC DNA]</scope>
</reference>
<reference key="3">
    <citation type="journal article" date="2004" name="Genome Res.">
        <title>The status, quality, and expansion of the NIH full-length cDNA project: the Mammalian Gene Collection (MGC).</title>
        <authorList>
            <consortium name="The MGC Project Team"/>
        </authorList>
    </citation>
    <scope>NUCLEOTIDE SEQUENCE [LARGE SCALE MRNA]</scope>
</reference>
<reference key="4">
    <citation type="journal article" date="2011" name="Invest. Ophthalmol. Vis. Sci.">
        <title>Olfactomedin 2: expression in the eye and interaction with other olfactomedin domain-containing proteins.</title>
        <authorList>
            <person name="Sultana A."/>
            <person name="Nakaya N."/>
            <person name="Senatorov V.V."/>
            <person name="Tomarev S.I."/>
        </authorList>
    </citation>
    <scope>TISSUE SPECIFICITY</scope>
    <scope>DEVELOPMENTAL STAGE</scope>
</reference>
<reference key="5">
    <citation type="journal article" date="2012" name="Neuron">
        <title>High-resolution proteomics unravel architecture and molecular diversity of native AMPA receptor complexes.</title>
        <authorList>
            <person name="Schwenk J."/>
            <person name="Harmel N."/>
            <person name="Brechet A."/>
            <person name="Zolles G."/>
            <person name="Berkefeld H."/>
            <person name="Muller C.S."/>
            <person name="Bildl W."/>
            <person name="Baehrens D."/>
            <person name="Huber B."/>
            <person name="Kulik A."/>
            <person name="Klocker N."/>
            <person name="Schulte U."/>
            <person name="Fakler B."/>
        </authorList>
    </citation>
    <scope>IDENTIFICATION IN AMPAR COMPLEX</scope>
    <scope>SUBCELLULAR LOCATION</scope>
    <scope>TISSUE SPECIFICITY</scope>
</reference>
<reference key="6">
    <citation type="journal article" date="2014" name="Exp. Neurol.">
        <title>Deletion of olfactomedin 2 induces changes in the AMPA receptor complex and impairs visual, olfactory, and motor functions in mice.</title>
        <authorList>
            <person name="Sultana A."/>
            <person name="Nakaya N."/>
            <person name="Dong L."/>
            <person name="Abu-Asab M."/>
            <person name="Qian H."/>
            <person name="Tomarev S.I."/>
        </authorList>
    </citation>
    <scope>FUNCTION</scope>
    <scope>INTERACTION WITH GRIA2</scope>
    <scope>SUBCELLULAR LOCATION</scope>
    <scope>TISSUE SPECIFICITY</scope>
    <scope>DISRUPTION PHENOTYPE</scope>
</reference>
<reference key="7">
    <citation type="journal article" date="2017" name="Arterioscler. Thromb. Vasc. Biol.">
        <title>Olfactomedin 2 regulates smooth muscle phenotypic modulation and vascular remodeling through mediating Runt-related transcription factor 2 binding to serum response factor.</title>
        <authorList>
            <person name="Shi N."/>
            <person name="Li C.X."/>
            <person name="Cui X.B."/>
            <person name="Tomarev S.I."/>
            <person name="Chen S.Y."/>
        </authorList>
    </citation>
    <scope>TISSUE SPECIFICITY</scope>
</reference>